<reference key="1">
    <citation type="submission" date="1999-04" db="EMBL/GenBank/DDBJ databases">
        <title>Murine HIG1 - a novel hypoxia-induced gene.</title>
        <authorList>
            <person name="Schindler C."/>
            <person name="Denko N.C."/>
            <person name="Koong A.C."/>
            <person name="Giaccia A.J."/>
        </authorList>
    </citation>
    <scope>NUCLEOTIDE SEQUENCE [MRNA]</scope>
</reference>
<reference key="2">
    <citation type="submission" date="2001-03" db="EMBL/GenBank/DDBJ databases">
        <authorList>
            <person name="Wang J."/>
            <person name="Steiner D.F."/>
        </authorList>
    </citation>
    <scope>NUCLEOTIDE SEQUENCE [MRNA]</scope>
    <source>
        <strain>C57BL/6J</strain>
        <tissue>Pancreas</tissue>
    </source>
</reference>
<reference key="3">
    <citation type="journal article" date="2005" name="Science">
        <title>The transcriptional landscape of the mammalian genome.</title>
        <authorList>
            <person name="Carninci P."/>
            <person name="Kasukawa T."/>
            <person name="Katayama S."/>
            <person name="Gough J."/>
            <person name="Frith M.C."/>
            <person name="Maeda N."/>
            <person name="Oyama R."/>
            <person name="Ravasi T."/>
            <person name="Lenhard B."/>
            <person name="Wells C."/>
            <person name="Kodzius R."/>
            <person name="Shimokawa K."/>
            <person name="Bajic V.B."/>
            <person name="Brenner S.E."/>
            <person name="Batalov S."/>
            <person name="Forrest A.R."/>
            <person name="Zavolan M."/>
            <person name="Davis M.J."/>
            <person name="Wilming L.G."/>
            <person name="Aidinis V."/>
            <person name="Allen J.E."/>
            <person name="Ambesi-Impiombato A."/>
            <person name="Apweiler R."/>
            <person name="Aturaliya R.N."/>
            <person name="Bailey T.L."/>
            <person name="Bansal M."/>
            <person name="Baxter L."/>
            <person name="Beisel K.W."/>
            <person name="Bersano T."/>
            <person name="Bono H."/>
            <person name="Chalk A.M."/>
            <person name="Chiu K.P."/>
            <person name="Choudhary V."/>
            <person name="Christoffels A."/>
            <person name="Clutterbuck D.R."/>
            <person name="Crowe M.L."/>
            <person name="Dalla E."/>
            <person name="Dalrymple B.P."/>
            <person name="de Bono B."/>
            <person name="Della Gatta G."/>
            <person name="di Bernardo D."/>
            <person name="Down T."/>
            <person name="Engstrom P."/>
            <person name="Fagiolini M."/>
            <person name="Faulkner G."/>
            <person name="Fletcher C.F."/>
            <person name="Fukushima T."/>
            <person name="Furuno M."/>
            <person name="Futaki S."/>
            <person name="Gariboldi M."/>
            <person name="Georgii-Hemming P."/>
            <person name="Gingeras T.R."/>
            <person name="Gojobori T."/>
            <person name="Green R.E."/>
            <person name="Gustincich S."/>
            <person name="Harbers M."/>
            <person name="Hayashi Y."/>
            <person name="Hensch T.K."/>
            <person name="Hirokawa N."/>
            <person name="Hill D."/>
            <person name="Huminiecki L."/>
            <person name="Iacono M."/>
            <person name="Ikeo K."/>
            <person name="Iwama A."/>
            <person name="Ishikawa T."/>
            <person name="Jakt M."/>
            <person name="Kanapin A."/>
            <person name="Katoh M."/>
            <person name="Kawasawa Y."/>
            <person name="Kelso J."/>
            <person name="Kitamura H."/>
            <person name="Kitano H."/>
            <person name="Kollias G."/>
            <person name="Krishnan S.P."/>
            <person name="Kruger A."/>
            <person name="Kummerfeld S.K."/>
            <person name="Kurochkin I.V."/>
            <person name="Lareau L.F."/>
            <person name="Lazarevic D."/>
            <person name="Lipovich L."/>
            <person name="Liu J."/>
            <person name="Liuni S."/>
            <person name="McWilliam S."/>
            <person name="Madan Babu M."/>
            <person name="Madera M."/>
            <person name="Marchionni L."/>
            <person name="Matsuda H."/>
            <person name="Matsuzawa S."/>
            <person name="Miki H."/>
            <person name="Mignone F."/>
            <person name="Miyake S."/>
            <person name="Morris K."/>
            <person name="Mottagui-Tabar S."/>
            <person name="Mulder N."/>
            <person name="Nakano N."/>
            <person name="Nakauchi H."/>
            <person name="Ng P."/>
            <person name="Nilsson R."/>
            <person name="Nishiguchi S."/>
            <person name="Nishikawa S."/>
            <person name="Nori F."/>
            <person name="Ohara O."/>
            <person name="Okazaki Y."/>
            <person name="Orlando V."/>
            <person name="Pang K.C."/>
            <person name="Pavan W.J."/>
            <person name="Pavesi G."/>
            <person name="Pesole G."/>
            <person name="Petrovsky N."/>
            <person name="Piazza S."/>
            <person name="Reed J."/>
            <person name="Reid J.F."/>
            <person name="Ring B.Z."/>
            <person name="Ringwald M."/>
            <person name="Rost B."/>
            <person name="Ruan Y."/>
            <person name="Salzberg S.L."/>
            <person name="Sandelin A."/>
            <person name="Schneider C."/>
            <person name="Schoenbach C."/>
            <person name="Sekiguchi K."/>
            <person name="Semple C.A."/>
            <person name="Seno S."/>
            <person name="Sessa L."/>
            <person name="Sheng Y."/>
            <person name="Shibata Y."/>
            <person name="Shimada H."/>
            <person name="Shimada K."/>
            <person name="Silva D."/>
            <person name="Sinclair B."/>
            <person name="Sperling S."/>
            <person name="Stupka E."/>
            <person name="Sugiura K."/>
            <person name="Sultana R."/>
            <person name="Takenaka Y."/>
            <person name="Taki K."/>
            <person name="Tammoja K."/>
            <person name="Tan S.L."/>
            <person name="Tang S."/>
            <person name="Taylor M.S."/>
            <person name="Tegner J."/>
            <person name="Teichmann S.A."/>
            <person name="Ueda H.R."/>
            <person name="van Nimwegen E."/>
            <person name="Verardo R."/>
            <person name="Wei C.L."/>
            <person name="Yagi K."/>
            <person name="Yamanishi H."/>
            <person name="Zabarovsky E."/>
            <person name="Zhu S."/>
            <person name="Zimmer A."/>
            <person name="Hide W."/>
            <person name="Bult C."/>
            <person name="Grimmond S.M."/>
            <person name="Teasdale R.D."/>
            <person name="Liu E.T."/>
            <person name="Brusic V."/>
            <person name="Quackenbush J."/>
            <person name="Wahlestedt C."/>
            <person name="Mattick J.S."/>
            <person name="Hume D.A."/>
            <person name="Kai C."/>
            <person name="Sasaki D."/>
            <person name="Tomaru Y."/>
            <person name="Fukuda S."/>
            <person name="Kanamori-Katayama M."/>
            <person name="Suzuki M."/>
            <person name="Aoki J."/>
            <person name="Arakawa T."/>
            <person name="Iida J."/>
            <person name="Imamura K."/>
            <person name="Itoh M."/>
            <person name="Kato T."/>
            <person name="Kawaji H."/>
            <person name="Kawagashira N."/>
            <person name="Kawashima T."/>
            <person name="Kojima M."/>
            <person name="Kondo S."/>
            <person name="Konno H."/>
            <person name="Nakano K."/>
            <person name="Ninomiya N."/>
            <person name="Nishio T."/>
            <person name="Okada M."/>
            <person name="Plessy C."/>
            <person name="Shibata K."/>
            <person name="Shiraki T."/>
            <person name="Suzuki S."/>
            <person name="Tagami M."/>
            <person name="Waki K."/>
            <person name="Watahiki A."/>
            <person name="Okamura-Oho Y."/>
            <person name="Suzuki H."/>
            <person name="Kawai J."/>
            <person name="Hayashizaki Y."/>
        </authorList>
    </citation>
    <scope>NUCLEOTIDE SEQUENCE [LARGE SCALE MRNA]</scope>
    <source>
        <strain>C57BL/6J</strain>
        <tissue>Stomach</tissue>
    </source>
</reference>
<reference key="4">
    <citation type="journal article" date="2010" name="Cell">
        <title>A tissue-specific atlas of mouse protein phosphorylation and expression.</title>
        <authorList>
            <person name="Huttlin E.L."/>
            <person name="Jedrychowski M.P."/>
            <person name="Elias J.E."/>
            <person name="Goswami T."/>
            <person name="Rad R."/>
            <person name="Beausoleil S.A."/>
            <person name="Villen J."/>
            <person name="Haas W."/>
            <person name="Sowa M.E."/>
            <person name="Gygi S.P."/>
        </authorList>
    </citation>
    <scope>IDENTIFICATION BY MASS SPECTROMETRY [LARGE SCALE ANALYSIS]</scope>
    <source>
        <tissue>Brown adipose tissue</tissue>
        <tissue>Heart</tissue>
        <tissue>Liver</tissue>
        <tissue>Testis</tissue>
    </source>
</reference>
<accession>Q9JLR9</accession>
<organism>
    <name type="scientific">Mus musculus</name>
    <name type="common">Mouse</name>
    <dbReference type="NCBI Taxonomy" id="10090"/>
    <lineage>
        <taxon>Eukaryota</taxon>
        <taxon>Metazoa</taxon>
        <taxon>Chordata</taxon>
        <taxon>Craniata</taxon>
        <taxon>Vertebrata</taxon>
        <taxon>Euteleostomi</taxon>
        <taxon>Mammalia</taxon>
        <taxon>Eutheria</taxon>
        <taxon>Euarchontoglires</taxon>
        <taxon>Glires</taxon>
        <taxon>Rodentia</taxon>
        <taxon>Myomorpha</taxon>
        <taxon>Muroidea</taxon>
        <taxon>Muridae</taxon>
        <taxon>Murinae</taxon>
        <taxon>Mus</taxon>
        <taxon>Mus</taxon>
    </lineage>
</organism>
<evidence type="ECO:0000250" key="1"/>
<evidence type="ECO:0000250" key="2">
    <source>
        <dbReference type="UniProtKB" id="Q8VH49"/>
    </source>
</evidence>
<evidence type="ECO:0000250" key="3">
    <source>
        <dbReference type="UniProtKB" id="Q9Y241"/>
    </source>
</evidence>
<evidence type="ECO:0000255" key="4">
    <source>
        <dbReference type="PROSITE-ProRule" id="PRU00836"/>
    </source>
</evidence>
<gene>
    <name type="primary">Higd1a</name>
    <name type="synonym">Hig1</name>
</gene>
<protein>
    <recommendedName>
        <fullName>HIG1 domain family member 1A, mitochondrial</fullName>
    </recommendedName>
    <alternativeName>
        <fullName>Hypoxia-inducible gene 1 protein</fullName>
    </alternativeName>
</protein>
<keyword id="KW-0007">Acetylation</keyword>
<keyword id="KW-0249">Electron transport</keyword>
<keyword id="KW-0472">Membrane</keyword>
<keyword id="KW-0496">Mitochondrion</keyword>
<keyword id="KW-0999">Mitochondrion inner membrane</keyword>
<keyword id="KW-0597">Phosphoprotein</keyword>
<keyword id="KW-1185">Reference proteome</keyword>
<keyword id="KW-0679">Respiratory chain</keyword>
<keyword id="KW-0346">Stress response</keyword>
<keyword id="KW-0812">Transmembrane</keyword>
<keyword id="KW-1133">Transmembrane helix</keyword>
<keyword id="KW-0813">Transport</keyword>
<proteinExistence type="evidence at protein level"/>
<feature type="initiator methionine" description="Removed" evidence="3">
    <location>
        <position position="1"/>
    </location>
</feature>
<feature type="chain" id="PRO_0000215771" description="HIG1 domain family member 1A, mitochondrial">
    <location>
        <begin position="2"/>
        <end position="95"/>
    </location>
</feature>
<feature type="transmembrane region" description="Helical" evidence="4">
    <location>
        <begin position="28"/>
        <end position="48"/>
    </location>
</feature>
<feature type="transmembrane region" description="Helical" evidence="4">
    <location>
        <begin position="69"/>
        <end position="89"/>
    </location>
</feature>
<feature type="domain" description="HIG1" evidence="4">
    <location>
        <begin position="2"/>
        <end position="93"/>
    </location>
</feature>
<feature type="modified residue" description="N-acetylserine" evidence="3">
    <location>
        <position position="2"/>
    </location>
</feature>
<feature type="modified residue" description="Phosphoserine" evidence="2">
    <location>
        <position position="8"/>
    </location>
</feature>
<comment type="function">
    <text evidence="1">Proposed subunit of cytochrome c oxidase (COX, complex IV), which is the terminal component of the mitochondrial respiratory chain that catalyzes the reduction of oxygen to water. May play a role in the assembly of respiratory supercomplexes (By similarity).</text>
</comment>
<comment type="subunit">
    <text evidence="1">Associates with cytochrome c oxidase (COX, complex IV); proposed complex component. Also associates with respiratory chain supercomplexes (By similarity).</text>
</comment>
<comment type="subcellular location">
    <subcellularLocation>
        <location evidence="4">Mitochondrion membrane</location>
        <topology evidence="4">Multi-pass membrane protein</topology>
    </subcellularLocation>
    <subcellularLocation>
        <location evidence="1">Mitochondrion inner membrane</location>
    </subcellularLocation>
</comment>
<comment type="induction">
    <text>By hypoxia.</text>
</comment>
<sequence length="95" mass="10425">MSTNTDLSLSSYDEGQGSKFIRKAKETPFVPIGMAGFAAIVAYGLYKLKSRGNTKMSIHLIHMRVAAQGFVVGAMTLGMGYSMYQEFWANPKPKP</sequence>
<name>HIG1A_MOUSE</name>
<dbReference type="EMBL" id="AF141312">
    <property type="protein sequence ID" value="AAF25721.1"/>
    <property type="molecule type" value="mRNA"/>
</dbReference>
<dbReference type="EMBL" id="AY028386">
    <property type="protein sequence ID" value="AAK21982.1"/>
    <property type="molecule type" value="mRNA"/>
</dbReference>
<dbReference type="EMBL" id="AK004166">
    <property type="protein sequence ID" value="BAB23202.1"/>
    <property type="molecule type" value="mRNA"/>
</dbReference>
<dbReference type="EMBL" id="AK008756">
    <property type="protein sequence ID" value="BAB25877.1"/>
    <property type="molecule type" value="mRNA"/>
</dbReference>
<dbReference type="EMBL" id="AK018360">
    <property type="protein sequence ID" value="BAB31176.1"/>
    <property type="molecule type" value="mRNA"/>
</dbReference>
<dbReference type="EMBL" id="BC021594">
    <property type="protein sequence ID" value="AAH21594.1"/>
    <property type="molecule type" value="mRNA"/>
</dbReference>
<dbReference type="EMBL" id="BC090259">
    <property type="protein sequence ID" value="AAH90259.1"/>
    <property type="molecule type" value="mRNA"/>
</dbReference>
<dbReference type="CCDS" id="CCDS40812.1"/>
<dbReference type="RefSeq" id="NP_001344766.1">
    <property type="nucleotide sequence ID" value="NM_001357837.1"/>
</dbReference>
<dbReference type="RefSeq" id="NP_001344767.1">
    <property type="nucleotide sequence ID" value="NM_001357838.1"/>
</dbReference>
<dbReference type="RefSeq" id="NP_001344768.1">
    <property type="nucleotide sequence ID" value="NM_001357839.1"/>
</dbReference>
<dbReference type="RefSeq" id="NP_001344769.1">
    <property type="nucleotide sequence ID" value="NM_001357840.1"/>
</dbReference>
<dbReference type="RefSeq" id="NP_001344770.1">
    <property type="nucleotide sequence ID" value="NM_001357841.1"/>
</dbReference>
<dbReference type="RefSeq" id="NP_062788.1">
    <property type="nucleotide sequence ID" value="NM_019814.5"/>
</dbReference>
<dbReference type="RefSeq" id="XP_006512264.1">
    <property type="nucleotide sequence ID" value="XM_006512201.1"/>
</dbReference>
<dbReference type="SMR" id="Q9JLR9"/>
<dbReference type="BioGRID" id="207883">
    <property type="interactions" value="1"/>
</dbReference>
<dbReference type="FunCoup" id="Q9JLR9">
    <property type="interactions" value="902"/>
</dbReference>
<dbReference type="STRING" id="10090.ENSMUSP00000054881"/>
<dbReference type="GlyGen" id="Q9JLR9">
    <property type="glycosylation" value="1 site, 1 O-linked glycan (1 site)"/>
</dbReference>
<dbReference type="iPTMnet" id="Q9JLR9"/>
<dbReference type="PhosphoSitePlus" id="Q9JLR9"/>
<dbReference type="jPOST" id="Q9JLR9"/>
<dbReference type="PaxDb" id="10090-ENSMUSP00000054881"/>
<dbReference type="ProteomicsDB" id="269752"/>
<dbReference type="Pumba" id="Q9JLR9"/>
<dbReference type="Antibodypedia" id="45649">
    <property type="antibodies" value="123 antibodies from 29 providers"/>
</dbReference>
<dbReference type="DNASU" id="56295"/>
<dbReference type="Ensembl" id="ENSMUST00000060251.8">
    <property type="protein sequence ID" value="ENSMUSP00000054881.7"/>
    <property type="gene ID" value="ENSMUSG00000038412.9"/>
</dbReference>
<dbReference type="Ensembl" id="ENSMUST00000213124.2">
    <property type="protein sequence ID" value="ENSMUSP00000149531.2"/>
    <property type="gene ID" value="ENSMUSG00000038412.9"/>
</dbReference>
<dbReference type="Ensembl" id="ENSMUST00000215300.2">
    <property type="protein sequence ID" value="ENSMUSP00000150726.2"/>
    <property type="gene ID" value="ENSMUSG00000038412.9"/>
</dbReference>
<dbReference type="GeneID" id="56295"/>
<dbReference type="KEGG" id="mmu:56295"/>
<dbReference type="UCSC" id="uc009seb.2">
    <property type="organism name" value="mouse"/>
</dbReference>
<dbReference type="AGR" id="MGI:1930666"/>
<dbReference type="CTD" id="25994"/>
<dbReference type="MGI" id="MGI:1930666">
    <property type="gene designation" value="Higd1a"/>
</dbReference>
<dbReference type="VEuPathDB" id="HostDB:ENSMUSG00000038412"/>
<dbReference type="eggNOG" id="KOG4431">
    <property type="taxonomic scope" value="Eukaryota"/>
</dbReference>
<dbReference type="GeneTree" id="ENSGT00940000154276"/>
<dbReference type="HOGENOM" id="CLU_153308_2_0_1"/>
<dbReference type="InParanoid" id="Q9JLR9"/>
<dbReference type="OMA" id="DQGEAPC"/>
<dbReference type="PhylomeDB" id="Q9JLR9"/>
<dbReference type="TreeFam" id="TF314628"/>
<dbReference type="Reactome" id="R-MMU-9864848">
    <property type="pathway name" value="Complex IV assembly"/>
</dbReference>
<dbReference type="BioGRID-ORCS" id="56295">
    <property type="hits" value="1 hit in 76 CRISPR screens"/>
</dbReference>
<dbReference type="ChiTaRS" id="Higd1a">
    <property type="organism name" value="mouse"/>
</dbReference>
<dbReference type="PRO" id="PR:Q9JLR9"/>
<dbReference type="Proteomes" id="UP000000589">
    <property type="component" value="Chromosome 9"/>
</dbReference>
<dbReference type="RNAct" id="Q9JLR9">
    <property type="molecule type" value="protein"/>
</dbReference>
<dbReference type="Bgee" id="ENSMUSG00000038412">
    <property type="expression patterns" value="Expressed in facial nucleus and 251 other cell types or tissues"/>
</dbReference>
<dbReference type="ExpressionAtlas" id="Q9JLR9">
    <property type="expression patterns" value="baseline and differential"/>
</dbReference>
<dbReference type="GO" id="GO:0016020">
    <property type="term" value="C:membrane"/>
    <property type="evidence" value="ECO:0000314"/>
    <property type="project" value="MGI"/>
</dbReference>
<dbReference type="GO" id="GO:0005743">
    <property type="term" value="C:mitochondrial inner membrane"/>
    <property type="evidence" value="ECO:0000314"/>
    <property type="project" value="MGI"/>
</dbReference>
<dbReference type="GO" id="GO:0005739">
    <property type="term" value="C:mitochondrion"/>
    <property type="evidence" value="ECO:0000314"/>
    <property type="project" value="CACAO"/>
</dbReference>
<dbReference type="GO" id="GO:0005654">
    <property type="term" value="C:nucleoplasm"/>
    <property type="evidence" value="ECO:0007669"/>
    <property type="project" value="Ensembl"/>
</dbReference>
<dbReference type="GO" id="GO:0005634">
    <property type="term" value="C:nucleus"/>
    <property type="evidence" value="ECO:0000314"/>
    <property type="project" value="CACAO"/>
</dbReference>
<dbReference type="GO" id="GO:0032991">
    <property type="term" value="C:protein-containing complex"/>
    <property type="evidence" value="ECO:0007669"/>
    <property type="project" value="Ensembl"/>
</dbReference>
<dbReference type="GO" id="GO:0042149">
    <property type="term" value="P:cellular response to glucose starvation"/>
    <property type="evidence" value="ECO:0000314"/>
    <property type="project" value="MGI"/>
</dbReference>
<dbReference type="GO" id="GO:0071456">
    <property type="term" value="P:cellular response to hypoxia"/>
    <property type="evidence" value="ECO:0000314"/>
    <property type="project" value="MGI"/>
</dbReference>
<dbReference type="GO" id="GO:0043066">
    <property type="term" value="P:negative regulation of apoptotic process"/>
    <property type="evidence" value="ECO:0000266"/>
    <property type="project" value="MGI"/>
</dbReference>
<dbReference type="GO" id="GO:0090201">
    <property type="term" value="P:negative regulation of release of cytochrome c from mitochondria"/>
    <property type="evidence" value="ECO:0000314"/>
    <property type="project" value="MGI"/>
</dbReference>
<dbReference type="Gene3D" id="6.10.140.1320">
    <property type="match status" value="1"/>
</dbReference>
<dbReference type="InterPro" id="IPR007667">
    <property type="entry name" value="Hypoxia_induced_domain"/>
</dbReference>
<dbReference type="InterPro" id="IPR050355">
    <property type="entry name" value="RCF1"/>
</dbReference>
<dbReference type="PANTHER" id="PTHR12297:SF5">
    <property type="entry name" value="HIG1 DOMAIN FAMILY MEMBER 1A, MITOCHONDRIAL"/>
    <property type="match status" value="1"/>
</dbReference>
<dbReference type="PANTHER" id="PTHR12297">
    <property type="entry name" value="HYPOXIA-INDUCBILE GENE 1 HIG1 -RELATED"/>
    <property type="match status" value="1"/>
</dbReference>
<dbReference type="Pfam" id="PF04588">
    <property type="entry name" value="HIG_1_N"/>
    <property type="match status" value="1"/>
</dbReference>
<dbReference type="PROSITE" id="PS51503">
    <property type="entry name" value="HIG1"/>
    <property type="match status" value="1"/>
</dbReference>